<name>THIO4_DICDI</name>
<accession>Q1ZXE0</accession>
<protein>
    <recommendedName>
        <fullName>Putative thioredoxin-4</fullName>
        <shortName>Trx-4</shortName>
    </recommendedName>
</protein>
<gene>
    <name type="primary">trxD</name>
    <name type="synonym">trx4</name>
    <name type="ORF">DDB_G0287849</name>
</gene>
<dbReference type="EMBL" id="AAFI02000104">
    <property type="protein sequence ID" value="EAS66847.2"/>
    <property type="molecule type" value="Genomic_DNA"/>
</dbReference>
<dbReference type="RefSeq" id="XP_001134530.2">
    <property type="nucleotide sequence ID" value="XM_001134530.2"/>
</dbReference>
<dbReference type="SMR" id="Q1ZXE0"/>
<dbReference type="FunCoup" id="Q1ZXE0">
    <property type="interactions" value="122"/>
</dbReference>
<dbReference type="PaxDb" id="44689-DDB0233281"/>
<dbReference type="EnsemblProtists" id="EAS66847">
    <property type="protein sequence ID" value="EAS66847"/>
    <property type="gene ID" value="DDB_G0287849"/>
</dbReference>
<dbReference type="GeneID" id="8626353"/>
<dbReference type="KEGG" id="ddi:DDB_G0287849"/>
<dbReference type="dictyBase" id="DDB_G0287849">
    <property type="gene designation" value="trxD"/>
</dbReference>
<dbReference type="VEuPathDB" id="AmoebaDB:DDB_G0287849"/>
<dbReference type="eggNOG" id="KOG0907">
    <property type="taxonomic scope" value="Eukaryota"/>
</dbReference>
<dbReference type="HOGENOM" id="CLU_090389_14_0_1"/>
<dbReference type="InParanoid" id="Q1ZXE0"/>
<dbReference type="OMA" id="FQFFVKG"/>
<dbReference type="PhylomeDB" id="Q1ZXE0"/>
<dbReference type="Reactome" id="R-DDI-3299685">
    <property type="pathway name" value="Detoxification of Reactive Oxygen Species"/>
</dbReference>
<dbReference type="Reactome" id="R-DDI-499943">
    <property type="pathway name" value="Interconversion of nucleotide di- and triphosphates"/>
</dbReference>
<dbReference type="Reactome" id="R-DDI-5628897">
    <property type="pathway name" value="TP53 Regulates Metabolic Genes"/>
</dbReference>
<dbReference type="Reactome" id="R-DDI-844456">
    <property type="pathway name" value="The NLRP3 inflammasome"/>
</dbReference>
<dbReference type="PRO" id="PR:Q1ZXE0"/>
<dbReference type="Proteomes" id="UP000002195">
    <property type="component" value="Chromosome 5"/>
</dbReference>
<dbReference type="GO" id="GO:0015036">
    <property type="term" value="F:disulfide oxidoreductase activity"/>
    <property type="evidence" value="ECO:0000250"/>
    <property type="project" value="dictyBase"/>
</dbReference>
<dbReference type="GO" id="GO:0003756">
    <property type="term" value="F:protein disulfide isomerase activity"/>
    <property type="evidence" value="ECO:0000250"/>
    <property type="project" value="dictyBase"/>
</dbReference>
<dbReference type="GO" id="GO:0015035">
    <property type="term" value="F:protein-disulfide reductase activity"/>
    <property type="evidence" value="ECO:0007669"/>
    <property type="project" value="InterPro"/>
</dbReference>
<dbReference type="CDD" id="cd02947">
    <property type="entry name" value="TRX_family"/>
    <property type="match status" value="1"/>
</dbReference>
<dbReference type="FunFam" id="3.40.30.10:FF:000245">
    <property type="entry name" value="Thioredoxin"/>
    <property type="match status" value="1"/>
</dbReference>
<dbReference type="Gene3D" id="3.40.30.10">
    <property type="entry name" value="Glutaredoxin"/>
    <property type="match status" value="1"/>
</dbReference>
<dbReference type="InterPro" id="IPR005746">
    <property type="entry name" value="Thioredoxin"/>
</dbReference>
<dbReference type="InterPro" id="IPR036249">
    <property type="entry name" value="Thioredoxin-like_sf"/>
</dbReference>
<dbReference type="InterPro" id="IPR013766">
    <property type="entry name" value="Thioredoxin_domain"/>
</dbReference>
<dbReference type="PANTHER" id="PTHR46115">
    <property type="entry name" value="THIOREDOXIN-LIKE PROTEIN 1"/>
    <property type="match status" value="1"/>
</dbReference>
<dbReference type="Pfam" id="PF00085">
    <property type="entry name" value="Thioredoxin"/>
    <property type="match status" value="1"/>
</dbReference>
<dbReference type="PIRSF" id="PIRSF000077">
    <property type="entry name" value="Thioredoxin"/>
    <property type="match status" value="1"/>
</dbReference>
<dbReference type="PRINTS" id="PR00421">
    <property type="entry name" value="THIOREDOXIN"/>
</dbReference>
<dbReference type="SUPFAM" id="SSF52833">
    <property type="entry name" value="Thioredoxin-like"/>
    <property type="match status" value="1"/>
</dbReference>
<dbReference type="PROSITE" id="PS51352">
    <property type="entry name" value="THIOREDOXIN_2"/>
    <property type="match status" value="1"/>
</dbReference>
<sequence>MSKVTNVSINTKLDELLKGDQVIINFGAEWCGACKVLEPIFNKLSTQYPLVTFLKVEIDKINVHESTKSITSIPTIMLYQKGKKTKEIVSPNETQLRKILDSMK</sequence>
<reference key="1">
    <citation type="journal article" date="2005" name="Nature">
        <title>The genome of the social amoeba Dictyostelium discoideum.</title>
        <authorList>
            <person name="Eichinger L."/>
            <person name="Pachebat J.A."/>
            <person name="Gloeckner G."/>
            <person name="Rajandream M.A."/>
            <person name="Sucgang R."/>
            <person name="Berriman M."/>
            <person name="Song J."/>
            <person name="Olsen R."/>
            <person name="Szafranski K."/>
            <person name="Xu Q."/>
            <person name="Tunggal B."/>
            <person name="Kummerfeld S."/>
            <person name="Madera M."/>
            <person name="Konfortov B.A."/>
            <person name="Rivero F."/>
            <person name="Bankier A.T."/>
            <person name="Lehmann R."/>
            <person name="Hamlin N."/>
            <person name="Davies R."/>
            <person name="Gaudet P."/>
            <person name="Fey P."/>
            <person name="Pilcher K."/>
            <person name="Chen G."/>
            <person name="Saunders D."/>
            <person name="Sodergren E.J."/>
            <person name="Davis P."/>
            <person name="Kerhornou A."/>
            <person name="Nie X."/>
            <person name="Hall N."/>
            <person name="Anjard C."/>
            <person name="Hemphill L."/>
            <person name="Bason N."/>
            <person name="Farbrother P."/>
            <person name="Desany B."/>
            <person name="Just E."/>
            <person name="Morio T."/>
            <person name="Rost R."/>
            <person name="Churcher C.M."/>
            <person name="Cooper J."/>
            <person name="Haydock S."/>
            <person name="van Driessche N."/>
            <person name="Cronin A."/>
            <person name="Goodhead I."/>
            <person name="Muzny D.M."/>
            <person name="Mourier T."/>
            <person name="Pain A."/>
            <person name="Lu M."/>
            <person name="Harper D."/>
            <person name="Lindsay R."/>
            <person name="Hauser H."/>
            <person name="James K.D."/>
            <person name="Quiles M."/>
            <person name="Madan Babu M."/>
            <person name="Saito T."/>
            <person name="Buchrieser C."/>
            <person name="Wardroper A."/>
            <person name="Felder M."/>
            <person name="Thangavelu M."/>
            <person name="Johnson D."/>
            <person name="Knights A."/>
            <person name="Loulseged H."/>
            <person name="Mungall K.L."/>
            <person name="Oliver K."/>
            <person name="Price C."/>
            <person name="Quail M.A."/>
            <person name="Urushihara H."/>
            <person name="Hernandez J."/>
            <person name="Rabbinowitsch E."/>
            <person name="Steffen D."/>
            <person name="Sanders M."/>
            <person name="Ma J."/>
            <person name="Kohara Y."/>
            <person name="Sharp S."/>
            <person name="Simmonds M.N."/>
            <person name="Spiegler S."/>
            <person name="Tivey A."/>
            <person name="Sugano S."/>
            <person name="White B."/>
            <person name="Walker D."/>
            <person name="Woodward J.R."/>
            <person name="Winckler T."/>
            <person name="Tanaka Y."/>
            <person name="Shaulsky G."/>
            <person name="Schleicher M."/>
            <person name="Weinstock G.M."/>
            <person name="Rosenthal A."/>
            <person name="Cox E.C."/>
            <person name="Chisholm R.L."/>
            <person name="Gibbs R.A."/>
            <person name="Loomis W.F."/>
            <person name="Platzer M."/>
            <person name="Kay R.R."/>
            <person name="Williams J.G."/>
            <person name="Dear P.H."/>
            <person name="Noegel A.A."/>
            <person name="Barrell B.G."/>
            <person name="Kuspa A."/>
        </authorList>
    </citation>
    <scope>NUCLEOTIDE SEQUENCE [LARGE SCALE GENOMIC DNA]</scope>
    <source>
        <strain>AX4</strain>
    </source>
</reference>
<proteinExistence type="inferred from homology"/>
<feature type="chain" id="PRO_0000312530" description="Putative thioredoxin-4">
    <location>
        <begin position="1"/>
        <end position="104"/>
    </location>
</feature>
<feature type="domain" description="Thioredoxin" evidence="2">
    <location>
        <begin position="2"/>
        <end position="104"/>
    </location>
</feature>
<feature type="active site" description="Nucleophile" evidence="1">
    <location>
        <position position="31"/>
    </location>
</feature>
<feature type="active site" description="Nucleophile" evidence="1">
    <location>
        <position position="34"/>
    </location>
</feature>
<feature type="site" description="Contributes to redox potential value" evidence="1">
    <location>
        <position position="32"/>
    </location>
</feature>
<feature type="site" description="Contributes to redox potential value" evidence="1">
    <location>
        <position position="33"/>
    </location>
</feature>
<feature type="disulfide bond" description="Redox-active" evidence="2">
    <location>
        <begin position="31"/>
        <end position="34"/>
    </location>
</feature>
<evidence type="ECO:0000250" key="1"/>
<evidence type="ECO:0000255" key="2">
    <source>
        <dbReference type="PROSITE-ProRule" id="PRU00691"/>
    </source>
</evidence>
<evidence type="ECO:0000305" key="3"/>
<organism>
    <name type="scientific">Dictyostelium discoideum</name>
    <name type="common">Social amoeba</name>
    <dbReference type="NCBI Taxonomy" id="44689"/>
    <lineage>
        <taxon>Eukaryota</taxon>
        <taxon>Amoebozoa</taxon>
        <taxon>Evosea</taxon>
        <taxon>Eumycetozoa</taxon>
        <taxon>Dictyostelia</taxon>
        <taxon>Dictyosteliales</taxon>
        <taxon>Dictyosteliaceae</taxon>
        <taxon>Dictyostelium</taxon>
    </lineage>
</organism>
<keyword id="KW-1015">Disulfide bond</keyword>
<keyword id="KW-0249">Electron transport</keyword>
<keyword id="KW-0676">Redox-active center</keyword>
<keyword id="KW-1185">Reference proteome</keyword>
<keyword id="KW-0813">Transport</keyword>
<comment type="function">
    <text evidence="1">Participates in various redox reactions through the reversible oxidation of its active center dithiol to a disulfide and catalyzes dithiol-disulfide exchange reactions.</text>
</comment>
<comment type="similarity">
    <text evidence="3">Belongs to the thioredoxin family.</text>
</comment>